<proteinExistence type="inferred from homology"/>
<evidence type="ECO:0000255" key="1">
    <source>
        <dbReference type="HAMAP-Rule" id="MF_00223"/>
    </source>
</evidence>
<dbReference type="EC" id="3.5.4.16" evidence="1"/>
<dbReference type="EMBL" id="CP000764">
    <property type="protein sequence ID" value="ABS21556.1"/>
    <property type="molecule type" value="Genomic_DNA"/>
</dbReference>
<dbReference type="RefSeq" id="WP_011984307.1">
    <property type="nucleotide sequence ID" value="NC_009674.1"/>
</dbReference>
<dbReference type="SMR" id="A7GN48"/>
<dbReference type="STRING" id="315749.Bcer98_1234"/>
<dbReference type="GeneID" id="33896583"/>
<dbReference type="KEGG" id="bcy:Bcer98_1234"/>
<dbReference type="eggNOG" id="COG0302">
    <property type="taxonomic scope" value="Bacteria"/>
</dbReference>
<dbReference type="HOGENOM" id="CLU_049768_3_3_9"/>
<dbReference type="OrthoDB" id="9801207at2"/>
<dbReference type="UniPathway" id="UPA00848">
    <property type="reaction ID" value="UER00151"/>
</dbReference>
<dbReference type="Proteomes" id="UP000002300">
    <property type="component" value="Chromosome"/>
</dbReference>
<dbReference type="GO" id="GO:0005737">
    <property type="term" value="C:cytoplasm"/>
    <property type="evidence" value="ECO:0007669"/>
    <property type="project" value="TreeGrafter"/>
</dbReference>
<dbReference type="GO" id="GO:0005525">
    <property type="term" value="F:GTP binding"/>
    <property type="evidence" value="ECO:0007669"/>
    <property type="project" value="UniProtKB-KW"/>
</dbReference>
<dbReference type="GO" id="GO:0003934">
    <property type="term" value="F:GTP cyclohydrolase I activity"/>
    <property type="evidence" value="ECO:0007669"/>
    <property type="project" value="UniProtKB-UniRule"/>
</dbReference>
<dbReference type="GO" id="GO:0008270">
    <property type="term" value="F:zinc ion binding"/>
    <property type="evidence" value="ECO:0007669"/>
    <property type="project" value="UniProtKB-UniRule"/>
</dbReference>
<dbReference type="GO" id="GO:0006730">
    <property type="term" value="P:one-carbon metabolic process"/>
    <property type="evidence" value="ECO:0007669"/>
    <property type="project" value="UniProtKB-UniRule"/>
</dbReference>
<dbReference type="GO" id="GO:0006729">
    <property type="term" value="P:tetrahydrobiopterin biosynthetic process"/>
    <property type="evidence" value="ECO:0007669"/>
    <property type="project" value="TreeGrafter"/>
</dbReference>
<dbReference type="GO" id="GO:0046654">
    <property type="term" value="P:tetrahydrofolate biosynthetic process"/>
    <property type="evidence" value="ECO:0007669"/>
    <property type="project" value="UniProtKB-UniRule"/>
</dbReference>
<dbReference type="CDD" id="cd00642">
    <property type="entry name" value="GTP_cyclohydro1"/>
    <property type="match status" value="1"/>
</dbReference>
<dbReference type="FunFam" id="1.10.286.10:FF:000001">
    <property type="entry name" value="GTP cyclohydrolase 1"/>
    <property type="match status" value="1"/>
</dbReference>
<dbReference type="FunFam" id="3.30.1130.10:FF:000001">
    <property type="entry name" value="GTP cyclohydrolase 1"/>
    <property type="match status" value="1"/>
</dbReference>
<dbReference type="Gene3D" id="1.10.286.10">
    <property type="match status" value="1"/>
</dbReference>
<dbReference type="Gene3D" id="3.30.1130.10">
    <property type="match status" value="1"/>
</dbReference>
<dbReference type="HAMAP" id="MF_00223">
    <property type="entry name" value="FolE"/>
    <property type="match status" value="1"/>
</dbReference>
<dbReference type="InterPro" id="IPR043133">
    <property type="entry name" value="GTP-CH-I_C/QueF"/>
</dbReference>
<dbReference type="InterPro" id="IPR043134">
    <property type="entry name" value="GTP-CH-I_N"/>
</dbReference>
<dbReference type="InterPro" id="IPR001474">
    <property type="entry name" value="GTP_CycHdrlase_I"/>
</dbReference>
<dbReference type="InterPro" id="IPR018234">
    <property type="entry name" value="GTP_CycHdrlase_I_CS"/>
</dbReference>
<dbReference type="InterPro" id="IPR020602">
    <property type="entry name" value="GTP_CycHdrlase_I_dom"/>
</dbReference>
<dbReference type="NCBIfam" id="TIGR00063">
    <property type="entry name" value="folE"/>
    <property type="match status" value="1"/>
</dbReference>
<dbReference type="NCBIfam" id="NF006825">
    <property type="entry name" value="PRK09347.1-2"/>
    <property type="match status" value="1"/>
</dbReference>
<dbReference type="NCBIfam" id="NF006826">
    <property type="entry name" value="PRK09347.1-3"/>
    <property type="match status" value="1"/>
</dbReference>
<dbReference type="PANTHER" id="PTHR11109:SF7">
    <property type="entry name" value="GTP CYCLOHYDROLASE 1"/>
    <property type="match status" value="1"/>
</dbReference>
<dbReference type="PANTHER" id="PTHR11109">
    <property type="entry name" value="GTP CYCLOHYDROLASE I"/>
    <property type="match status" value="1"/>
</dbReference>
<dbReference type="Pfam" id="PF01227">
    <property type="entry name" value="GTP_cyclohydroI"/>
    <property type="match status" value="1"/>
</dbReference>
<dbReference type="SUPFAM" id="SSF55620">
    <property type="entry name" value="Tetrahydrobiopterin biosynthesis enzymes-like"/>
    <property type="match status" value="1"/>
</dbReference>
<dbReference type="PROSITE" id="PS00859">
    <property type="entry name" value="GTP_CYCLOHYDROL_1_1"/>
    <property type="match status" value="1"/>
</dbReference>
<dbReference type="PROSITE" id="PS00860">
    <property type="entry name" value="GTP_CYCLOHYDROL_1_2"/>
    <property type="match status" value="1"/>
</dbReference>
<accession>A7GN48</accession>
<sequence length="189" mass="21063">MAKVNLEQIEHAVRLILEAIGDDPNREGVLDTPRRVAKMYAEVFSGMHEDPKEHLHKVFGEDHEELVLVKDIPFYSMCEHHLVPFYGVAHVAYIPRGGKVTGLSKLARTVDTIARRPQLQERITSTVADSIMEVLEPHGVMVVVEAEHMCMTMRGVKKPGAKTVTTAVRGVLENDAAARSEILSFIKSK</sequence>
<keyword id="KW-0342">GTP-binding</keyword>
<keyword id="KW-0378">Hydrolase</keyword>
<keyword id="KW-0479">Metal-binding</keyword>
<keyword id="KW-0547">Nucleotide-binding</keyword>
<keyword id="KW-0554">One-carbon metabolism</keyword>
<keyword id="KW-0862">Zinc</keyword>
<gene>
    <name evidence="1" type="primary">folE</name>
    <name type="ordered locus">Bcer98_1234</name>
</gene>
<reference key="1">
    <citation type="journal article" date="2008" name="Chem. Biol. Interact.">
        <title>Extending the Bacillus cereus group genomics to putative food-borne pathogens of different toxicity.</title>
        <authorList>
            <person name="Lapidus A."/>
            <person name="Goltsman E."/>
            <person name="Auger S."/>
            <person name="Galleron N."/>
            <person name="Segurens B."/>
            <person name="Dossat C."/>
            <person name="Land M.L."/>
            <person name="Broussolle V."/>
            <person name="Brillard J."/>
            <person name="Guinebretiere M.-H."/>
            <person name="Sanchis V."/>
            <person name="Nguen-the C."/>
            <person name="Lereclus D."/>
            <person name="Richardson P."/>
            <person name="Wincker P."/>
            <person name="Weissenbach J."/>
            <person name="Ehrlich S.D."/>
            <person name="Sorokin A."/>
        </authorList>
    </citation>
    <scope>NUCLEOTIDE SEQUENCE [LARGE SCALE GENOMIC DNA]</scope>
    <source>
        <strain>DSM 22905 / CIP 110041 / 391-98 / NVH 391-98</strain>
    </source>
</reference>
<name>GCH1_BACCN</name>
<protein>
    <recommendedName>
        <fullName evidence="1">GTP cyclohydrolase 1</fullName>
        <ecNumber evidence="1">3.5.4.16</ecNumber>
    </recommendedName>
    <alternativeName>
        <fullName evidence="1">GTP cyclohydrolase I</fullName>
        <shortName evidence="1">GTP-CH-I</shortName>
    </alternativeName>
</protein>
<comment type="catalytic activity">
    <reaction evidence="1">
        <text>GTP + H2O = 7,8-dihydroneopterin 3'-triphosphate + formate + H(+)</text>
        <dbReference type="Rhea" id="RHEA:17473"/>
        <dbReference type="ChEBI" id="CHEBI:15377"/>
        <dbReference type="ChEBI" id="CHEBI:15378"/>
        <dbReference type="ChEBI" id="CHEBI:15740"/>
        <dbReference type="ChEBI" id="CHEBI:37565"/>
        <dbReference type="ChEBI" id="CHEBI:58462"/>
        <dbReference type="EC" id="3.5.4.16"/>
    </reaction>
</comment>
<comment type="pathway">
    <text evidence="1">Cofactor biosynthesis; 7,8-dihydroneopterin triphosphate biosynthesis; 7,8-dihydroneopterin triphosphate from GTP: step 1/1.</text>
</comment>
<comment type="subunit">
    <text evidence="1">Homomer.</text>
</comment>
<comment type="similarity">
    <text evidence="1">Belongs to the GTP cyclohydrolase I family.</text>
</comment>
<organism>
    <name type="scientific">Bacillus cytotoxicus (strain DSM 22905 / CIP 110041 / 391-98 / NVH 391-98)</name>
    <dbReference type="NCBI Taxonomy" id="315749"/>
    <lineage>
        <taxon>Bacteria</taxon>
        <taxon>Bacillati</taxon>
        <taxon>Bacillota</taxon>
        <taxon>Bacilli</taxon>
        <taxon>Bacillales</taxon>
        <taxon>Bacillaceae</taxon>
        <taxon>Bacillus</taxon>
        <taxon>Bacillus cereus group</taxon>
    </lineage>
</organism>
<feature type="chain" id="PRO_1000078134" description="GTP cyclohydrolase 1">
    <location>
        <begin position="1"/>
        <end position="189"/>
    </location>
</feature>
<feature type="binding site" evidence="1">
    <location>
        <position position="78"/>
    </location>
    <ligand>
        <name>Zn(2+)</name>
        <dbReference type="ChEBI" id="CHEBI:29105"/>
    </ligand>
</feature>
<feature type="binding site" evidence="1">
    <location>
        <position position="81"/>
    </location>
    <ligand>
        <name>Zn(2+)</name>
        <dbReference type="ChEBI" id="CHEBI:29105"/>
    </ligand>
</feature>
<feature type="binding site" evidence="1">
    <location>
        <position position="150"/>
    </location>
    <ligand>
        <name>Zn(2+)</name>
        <dbReference type="ChEBI" id="CHEBI:29105"/>
    </ligand>
</feature>